<reference key="1">
    <citation type="submission" date="2006-12" db="EMBL/GenBank/DDBJ databases">
        <title>Complete sequence of Shewanella sp. W3-18-1.</title>
        <authorList>
            <consortium name="US DOE Joint Genome Institute"/>
            <person name="Copeland A."/>
            <person name="Lucas S."/>
            <person name="Lapidus A."/>
            <person name="Barry K."/>
            <person name="Detter J.C."/>
            <person name="Glavina del Rio T."/>
            <person name="Hammon N."/>
            <person name="Israni S."/>
            <person name="Dalin E."/>
            <person name="Tice H."/>
            <person name="Pitluck S."/>
            <person name="Chain P."/>
            <person name="Malfatti S."/>
            <person name="Shin M."/>
            <person name="Vergez L."/>
            <person name="Schmutz J."/>
            <person name="Larimer F."/>
            <person name="Land M."/>
            <person name="Hauser L."/>
            <person name="Kyrpides N."/>
            <person name="Lykidis A."/>
            <person name="Tiedje J."/>
            <person name="Richardson P."/>
        </authorList>
    </citation>
    <scope>NUCLEOTIDE SEQUENCE [LARGE SCALE GENOMIC DNA]</scope>
    <source>
        <strain>W3-18-1</strain>
    </source>
</reference>
<proteinExistence type="inferred from homology"/>
<evidence type="ECO:0000255" key="1">
    <source>
        <dbReference type="HAMAP-Rule" id="MF_00272"/>
    </source>
</evidence>
<evidence type="ECO:0000255" key="2">
    <source>
        <dbReference type="PROSITE-ProRule" id="PRU01066"/>
    </source>
</evidence>
<sequence>MSNIPTELKYASSHEWIRKEEDGSYTVGITEHAQELLGDMVFVELPEVGDTVTAGDDCAVAESVKAASDIYAPISGEVIAVNEALEDSPELVNSDAYGEGWFFRVMPSDETEVDALLDAEGYQAVIDEE</sequence>
<organism>
    <name type="scientific">Shewanella sp. (strain W3-18-1)</name>
    <dbReference type="NCBI Taxonomy" id="351745"/>
    <lineage>
        <taxon>Bacteria</taxon>
        <taxon>Pseudomonadati</taxon>
        <taxon>Pseudomonadota</taxon>
        <taxon>Gammaproteobacteria</taxon>
        <taxon>Alteromonadales</taxon>
        <taxon>Shewanellaceae</taxon>
        <taxon>Shewanella</taxon>
    </lineage>
</organism>
<comment type="function">
    <text evidence="1">The glycine cleavage system catalyzes the degradation of glycine. The H protein shuttles the methylamine group of glycine from the P protein to the T protein.</text>
</comment>
<comment type="cofactor">
    <cofactor evidence="1">
        <name>(R)-lipoate</name>
        <dbReference type="ChEBI" id="CHEBI:83088"/>
    </cofactor>
    <text evidence="1">Binds 1 lipoyl cofactor covalently.</text>
</comment>
<comment type="subunit">
    <text evidence="1">The glycine cleavage system is composed of four proteins: P, T, L and H.</text>
</comment>
<comment type="similarity">
    <text evidence="1">Belongs to the GcvH family.</text>
</comment>
<gene>
    <name evidence="1" type="primary">gcvH</name>
    <name type="ordered locus">Sputw3181_0731</name>
</gene>
<protein>
    <recommendedName>
        <fullName evidence="1">Glycine cleavage system H protein</fullName>
    </recommendedName>
</protein>
<name>GCSH_SHESW</name>
<dbReference type="EMBL" id="CP000503">
    <property type="protein sequence ID" value="ABM23582.1"/>
    <property type="molecule type" value="Genomic_DNA"/>
</dbReference>
<dbReference type="RefSeq" id="WP_011788112.1">
    <property type="nucleotide sequence ID" value="NC_008750.1"/>
</dbReference>
<dbReference type="SMR" id="A1RFY7"/>
<dbReference type="GeneID" id="67444794"/>
<dbReference type="KEGG" id="shw:Sputw3181_0731"/>
<dbReference type="HOGENOM" id="CLU_097408_2_1_6"/>
<dbReference type="Proteomes" id="UP000002597">
    <property type="component" value="Chromosome"/>
</dbReference>
<dbReference type="GO" id="GO:0005829">
    <property type="term" value="C:cytosol"/>
    <property type="evidence" value="ECO:0007669"/>
    <property type="project" value="TreeGrafter"/>
</dbReference>
<dbReference type="GO" id="GO:0005960">
    <property type="term" value="C:glycine cleavage complex"/>
    <property type="evidence" value="ECO:0007669"/>
    <property type="project" value="InterPro"/>
</dbReference>
<dbReference type="GO" id="GO:0019464">
    <property type="term" value="P:glycine decarboxylation via glycine cleavage system"/>
    <property type="evidence" value="ECO:0007669"/>
    <property type="project" value="UniProtKB-UniRule"/>
</dbReference>
<dbReference type="CDD" id="cd06848">
    <property type="entry name" value="GCS_H"/>
    <property type="match status" value="1"/>
</dbReference>
<dbReference type="FunFam" id="2.40.50.100:FF:000011">
    <property type="entry name" value="Glycine cleavage system H protein"/>
    <property type="match status" value="1"/>
</dbReference>
<dbReference type="Gene3D" id="2.40.50.100">
    <property type="match status" value="1"/>
</dbReference>
<dbReference type="HAMAP" id="MF_00272">
    <property type="entry name" value="GcvH"/>
    <property type="match status" value="1"/>
</dbReference>
<dbReference type="InterPro" id="IPR003016">
    <property type="entry name" value="2-oxoA_DH_lipoyl-BS"/>
</dbReference>
<dbReference type="InterPro" id="IPR000089">
    <property type="entry name" value="Biotin_lipoyl"/>
</dbReference>
<dbReference type="InterPro" id="IPR002930">
    <property type="entry name" value="GCV_H"/>
</dbReference>
<dbReference type="InterPro" id="IPR033753">
    <property type="entry name" value="GCV_H/Fam206"/>
</dbReference>
<dbReference type="InterPro" id="IPR017453">
    <property type="entry name" value="GCV_H_sub"/>
</dbReference>
<dbReference type="InterPro" id="IPR011053">
    <property type="entry name" value="Single_hybrid_motif"/>
</dbReference>
<dbReference type="NCBIfam" id="TIGR00527">
    <property type="entry name" value="gcvH"/>
    <property type="match status" value="1"/>
</dbReference>
<dbReference type="NCBIfam" id="NF002270">
    <property type="entry name" value="PRK01202.1"/>
    <property type="match status" value="1"/>
</dbReference>
<dbReference type="PANTHER" id="PTHR11715">
    <property type="entry name" value="GLYCINE CLEAVAGE SYSTEM H PROTEIN"/>
    <property type="match status" value="1"/>
</dbReference>
<dbReference type="PANTHER" id="PTHR11715:SF3">
    <property type="entry name" value="GLYCINE CLEAVAGE SYSTEM H PROTEIN-RELATED"/>
    <property type="match status" value="1"/>
</dbReference>
<dbReference type="Pfam" id="PF01597">
    <property type="entry name" value="GCV_H"/>
    <property type="match status" value="1"/>
</dbReference>
<dbReference type="SUPFAM" id="SSF51230">
    <property type="entry name" value="Single hybrid motif"/>
    <property type="match status" value="1"/>
</dbReference>
<dbReference type="PROSITE" id="PS50968">
    <property type="entry name" value="BIOTINYL_LIPOYL"/>
    <property type="match status" value="1"/>
</dbReference>
<dbReference type="PROSITE" id="PS00189">
    <property type="entry name" value="LIPOYL"/>
    <property type="match status" value="1"/>
</dbReference>
<feature type="chain" id="PRO_0000302436" description="Glycine cleavage system H protein">
    <location>
        <begin position="1"/>
        <end position="129"/>
    </location>
</feature>
<feature type="domain" description="Lipoyl-binding" evidence="2">
    <location>
        <begin position="24"/>
        <end position="106"/>
    </location>
</feature>
<feature type="modified residue" description="N6-lipoyllysine" evidence="1">
    <location>
        <position position="65"/>
    </location>
</feature>
<keyword id="KW-0450">Lipoyl</keyword>
<accession>A1RFY7</accession>